<sequence length="888" mass="101134">MSPQLKSLDEEGDKSARRPTRKQTSRAACPQDGHRAQSSRKDPAKGSPRPGSSRKKQMEHGSYHKGLQGQKPRKVERSLQGRKKDRRTSLKEQRASPKKEREALRKEAGKQLRKPRSTSLGSSVSTGDSLSEEELAQILEQVEEKKKLITTVRNKPWPMAKKLRELREAQAFVEKYEGALGKGKGKHLYAYRMMMAKKWVKFKRDFDNFKTQCIPWEMKIKDIESHFGSSVASYFIFLRWMYGVNLVLFGLIFGLVIIPEVLMGMPYGSIPRKTVPRAEEERAMDFSVLWDFEGYIKYSALFYGYYNNQRTIGWLRYRLPMAYFMVGVSVFGYSLMIVIRSMASNTQGSTSEGDSDSFTFSFKMFTSWDYLIGNSETADNKYVSITTSFKESIVDEQESNKEGNIHLTRFLRVLANFLILCCLCGSGYLIYFVVKRSQEFSKMQNVSWYERNEVEIVMSLLGMFCPPLFETIAALENYHPRTGLKWQLGRIFALFLGNLYTFLLALMDDVHLKLSNEEKIKNITHWTLFNYYNSSGGNESVPRPPPHPADVPRGSCWETAVGIEFMRLTVSDMLVTYLTILVGDFLRACFVRFMNHCWCWDLEAGFPSYAEFDISGNVLGLIFNQGMIWMGSFYAPGLVGINVLRLLTSMYFQCWAVMSSNVPHERVFKASRSNNFYMGLLLLVLFLSLLPVAYTVMSLPPSFDCGPFSGKNRMYDVLHETIENDFPKFLGKIFAFLANPGLIIPAILLMFLAIYYLNSVSKSLSRANAQLRKKIQALREVEKNHKSIKGKAIVTYSEDTIKNSSKNATQIHLTKEEPTSHSSSQIQTLDKKAQGPHTSSTEGGASPSTSWHHVGSQPPRGRRDSGQPQSQTYTGRSPSGKRTQRPHN</sequence>
<reference key="1">
    <citation type="journal article" date="2002" name="Nat. Genet.">
        <title>Dominant and recessive deafness caused by mutations of a novel gene, TMC1, required for cochlear hair-cell function.</title>
        <authorList>
            <person name="Kurima K."/>
            <person name="Peters L.M."/>
            <person name="Yang Y."/>
            <person name="Riazuddin S."/>
            <person name="Ahmed Z.M."/>
            <person name="Naz S."/>
            <person name="Arnaud D."/>
            <person name="Drury S."/>
            <person name="Mo J."/>
            <person name="Makishima T."/>
            <person name="Ghosh M."/>
            <person name="Menon P.S.N."/>
            <person name="Deshmukh D."/>
            <person name="Oddoux C."/>
            <person name="Ostrer H."/>
            <person name="Khan S."/>
            <person name="Raizuddin S."/>
            <person name="Deininger P.L."/>
            <person name="Hampton L.L."/>
            <person name="Sullivan S.L."/>
            <person name="Battey J.F."/>
            <person name="Keats B.J.B."/>
            <person name="Wilcox E.R."/>
            <person name="Friedman T.B."/>
            <person name="Griffith A.J."/>
        </authorList>
    </citation>
    <scope>NUCLEOTIDE SEQUENCE [MRNA]</scope>
    <scope>TISSUE SPECIFICITY</scope>
    <scope>DEVELOPMENTAL STAGE</scope>
    <source>
        <tissue>Brain</tissue>
        <tissue>Inner ear</tissue>
        <tissue>Testis</tissue>
    </source>
</reference>
<reference key="2">
    <citation type="journal article" date="2003" name="BMC Genomics">
        <title>TMC and EVER genes belong to a larger novel family, the TMC gene family encoding transmembrane proteins.</title>
        <authorList>
            <person name="Keresztes G."/>
            <person name="Mutai H."/>
            <person name="Heller S."/>
        </authorList>
    </citation>
    <scope>NUCLEOTIDE SEQUENCE [MRNA] OF 505-643</scope>
    <scope>TISSUE SPECIFICITY</scope>
    <source>
        <strain>C57BL/6J</strain>
    </source>
</reference>
<reference key="3">
    <citation type="journal article" date="2013" name="Neuron">
        <title>TMC1 and TMC2 are components of the mechanotransduction channel in hair cells of the mammalian inner ear.</title>
        <authorList>
            <person name="Pan B."/>
            <person name="Geleoc G.S."/>
            <person name="Asai Y."/>
            <person name="Horwitz G.C."/>
            <person name="Kurima K."/>
            <person name="Ishikawa K."/>
            <person name="Kawashima Y."/>
            <person name="Griffith A.J."/>
            <person name="Holt J.R."/>
        </authorList>
    </citation>
    <scope>FUNCTION</scope>
    <scope>TRANSPORTER ACTIVITY</scope>
    <scope>DISRUPTION PHENOTYPE</scope>
</reference>
<reference key="4">
    <citation type="journal article" date="2014" name="Proc. Natl. Acad. Sci. U.S.A.">
        <title>Tip-link protein protocadherin 15 interacts with transmembrane channel-like proteins TMC1 and TMC2.</title>
        <authorList>
            <person name="Maeda R."/>
            <person name="Kindt K.S."/>
            <person name="Mo W."/>
            <person name="Morgan C.P."/>
            <person name="Erickson T."/>
            <person name="Zhao H."/>
            <person name="Clemens-Grisham R."/>
            <person name="Barr-Gillespie P.G."/>
            <person name="Nicolson T."/>
        </authorList>
    </citation>
    <scope>INTERACTION WITH PCDH15</scope>
</reference>
<reference key="5">
    <citation type="journal article" date="2017" name="Elife">
        <title>The murine catecholamine methyltransferase mTOMT is essential for mechanotransduction by cochlear hair cells.</title>
        <authorList>
            <person name="Cunningham C.L."/>
            <person name="Wu Z."/>
            <person name="Jafari A."/>
            <person name="Zhao B."/>
            <person name="Schrode K."/>
            <person name="Harkins-Perry S."/>
            <person name="Lauer A."/>
            <person name="Mueller U."/>
        </authorList>
    </citation>
    <scope>INTERACTION WITH TOMT</scope>
    <scope>SUBCELLULAR LOCATION</scope>
</reference>
<reference key="6">
    <citation type="journal article" date="2017" name="Nat. Commun.">
        <title>CIB2 interacts with TMC1 and TMC2 and is essential for mechanotransduction in auditory hair cells.</title>
        <authorList>
            <person name="Giese A.P.J."/>
            <person name="Tang Y.Q."/>
            <person name="Sinha G.P."/>
            <person name="Bowl M.R."/>
            <person name="Goldring A.C."/>
            <person name="Parker A."/>
            <person name="Freeman M.J."/>
            <person name="Brown S.D.M."/>
            <person name="Riazuddin S."/>
            <person name="Fettiplace R."/>
            <person name="Schafer W.R."/>
            <person name="Frolenkov G.I."/>
            <person name="Ahmed Z.M."/>
        </authorList>
    </citation>
    <scope>INTERACTION WITH CIB2</scope>
</reference>
<reference key="7">
    <citation type="journal article" date="2018" name="Neuron">
        <title>TMC1 Forms the Pore of Mechanosensory Transduction Channels in Vertebrate Inner Ear Hair Cells.</title>
        <authorList>
            <person name="Pan B."/>
            <person name="Akyuz N."/>
            <person name="Liu X.P."/>
            <person name="Asai Y."/>
            <person name="Nist-Lund C."/>
            <person name="Kurima K."/>
            <person name="Derfler B.H."/>
            <person name="Gyoergy B."/>
            <person name="Limapichat W."/>
            <person name="Walujkar S."/>
            <person name="Wimalasena L.N."/>
            <person name="Sotomayor M."/>
            <person name="Corey D.P."/>
            <person name="Holt J.R."/>
        </authorList>
    </citation>
    <scope>HOMODIMER</scope>
    <scope>INTERACTION WITH TMC2; TMC5 AND TMC7</scope>
</reference>
<reference key="8">
    <citation type="journal article" date="2024" name="Nat. Commun.">
        <title>The Piezo channel is a mechano-sensitive complex component in the mammalian inner ear hair cell.</title>
        <authorList>
            <person name="Lee J.H."/>
            <person name="Perez-Flores M.C."/>
            <person name="Park S."/>
            <person name="Kim H.J."/>
            <person name="Chen Y."/>
            <person name="Kang M."/>
            <person name="Kersigo J."/>
            <person name="Choi J."/>
            <person name="Thai P.N."/>
            <person name="Woltz R.L."/>
            <person name="Perez-Flores D.C."/>
            <person name="Perkins G."/>
            <person name="Sihn C.R."/>
            <person name="Trinh P."/>
            <person name="Zhang X.D."/>
            <person name="Sirish P."/>
            <person name="Dong Y."/>
            <person name="Feng W.W."/>
            <person name="Pessah I.N."/>
            <person name="Dixon R.E."/>
            <person name="Sokolowski B."/>
            <person name="Fritzsch B."/>
            <person name="Chiamvimonvat N."/>
            <person name="Yamoah E.N."/>
        </authorList>
    </citation>
    <scope>FUNCTION</scope>
    <scope>TISSUE SPECIFICITY</scope>
    <scope>SUBCELLULAR LOCATION</scope>
</reference>
<dbReference type="EMBL" id="AF417581">
    <property type="protein sequence ID" value="AAL86402.1"/>
    <property type="molecule type" value="mRNA"/>
</dbReference>
<dbReference type="EMBL" id="AY263156">
    <property type="protein sequence ID" value="AAP35264.1"/>
    <property type="molecule type" value="mRNA"/>
</dbReference>
<dbReference type="CCDS" id="CCDS16736.1"/>
<dbReference type="RefSeq" id="NP_619596.1">
    <property type="nucleotide sequence ID" value="NM_138655.1"/>
</dbReference>
<dbReference type="SMR" id="Q8R4P4"/>
<dbReference type="CORUM" id="Q8R4P4"/>
<dbReference type="FunCoup" id="Q8R4P4">
    <property type="interactions" value="41"/>
</dbReference>
<dbReference type="STRING" id="10090.ENSMUSP00000077139"/>
<dbReference type="TCDB" id="1.A.17.4.1">
    <property type="family name" value="the calcium-dependent chloride channel (ca-clc) family"/>
</dbReference>
<dbReference type="GlyGen" id="Q8R4P4">
    <property type="glycosylation" value="1 site, 1 O-linked glycan (1 site)"/>
</dbReference>
<dbReference type="iPTMnet" id="Q8R4P4"/>
<dbReference type="PhosphoSitePlus" id="Q8R4P4"/>
<dbReference type="PaxDb" id="10090-ENSMUSP00000077139"/>
<dbReference type="Antibodypedia" id="23203">
    <property type="antibodies" value="66 antibodies from 16 providers"/>
</dbReference>
<dbReference type="DNASU" id="192140"/>
<dbReference type="Ensembl" id="ENSMUST00000077988.8">
    <property type="protein sequence ID" value="ENSMUSP00000077139.2"/>
    <property type="gene ID" value="ENSMUSG00000060332.10"/>
</dbReference>
<dbReference type="Ensembl" id="ENSMUST00000166774.3">
    <property type="protein sequence ID" value="ENSMUSP00000125843.3"/>
    <property type="gene ID" value="ENSMUSG00000060332.10"/>
</dbReference>
<dbReference type="GeneID" id="192140"/>
<dbReference type="KEGG" id="mmu:192140"/>
<dbReference type="UCSC" id="uc008mik.1">
    <property type="organism name" value="mouse"/>
</dbReference>
<dbReference type="AGR" id="MGI:2151017"/>
<dbReference type="CTD" id="117532"/>
<dbReference type="MGI" id="MGI:2151017">
    <property type="gene designation" value="Tmc2"/>
</dbReference>
<dbReference type="VEuPathDB" id="HostDB:ENSMUSG00000060332"/>
<dbReference type="eggNOG" id="ENOG502QVCF">
    <property type="taxonomic scope" value="Eukaryota"/>
</dbReference>
<dbReference type="GeneTree" id="ENSGT01050000244942"/>
<dbReference type="HOGENOM" id="CLU_013958_2_0_1"/>
<dbReference type="InParanoid" id="Q8R4P4"/>
<dbReference type="OMA" id="TMRSKPW"/>
<dbReference type="OrthoDB" id="5831905at2759"/>
<dbReference type="PhylomeDB" id="Q8R4P4"/>
<dbReference type="TreeFam" id="TF313462"/>
<dbReference type="BioGRID-ORCS" id="192140">
    <property type="hits" value="3 hits in 76 CRISPR screens"/>
</dbReference>
<dbReference type="PRO" id="PR:Q8R4P4"/>
<dbReference type="Proteomes" id="UP000000589">
    <property type="component" value="Chromosome 2"/>
</dbReference>
<dbReference type="RNAct" id="Q8R4P4">
    <property type="molecule type" value="protein"/>
</dbReference>
<dbReference type="Bgee" id="ENSMUSG00000060332">
    <property type="expression patterns" value="Expressed in crista ampullaris and 11 other cell types or tissues"/>
</dbReference>
<dbReference type="GO" id="GO:0032437">
    <property type="term" value="C:cuticular plate"/>
    <property type="evidence" value="ECO:0000314"/>
    <property type="project" value="UniProtKB"/>
</dbReference>
<dbReference type="GO" id="GO:0005886">
    <property type="term" value="C:plasma membrane"/>
    <property type="evidence" value="ECO:0000304"/>
    <property type="project" value="Reactome"/>
</dbReference>
<dbReference type="GO" id="GO:0032420">
    <property type="term" value="C:stereocilium"/>
    <property type="evidence" value="ECO:0000314"/>
    <property type="project" value="UniProtKB"/>
</dbReference>
<dbReference type="GO" id="GO:0032426">
    <property type="term" value="C:stereocilium tip"/>
    <property type="evidence" value="ECO:0000314"/>
    <property type="project" value="MGI"/>
</dbReference>
<dbReference type="GO" id="GO:0005262">
    <property type="term" value="F:calcium channel activity"/>
    <property type="evidence" value="ECO:0000315"/>
    <property type="project" value="UniProtKB"/>
</dbReference>
<dbReference type="GO" id="GO:0008381">
    <property type="term" value="F:mechanosensitive monoatomic ion channel activity"/>
    <property type="evidence" value="ECO:0000315"/>
    <property type="project" value="UniProtKB"/>
</dbReference>
<dbReference type="GO" id="GO:0005245">
    <property type="term" value="F:voltage-gated calcium channel activity"/>
    <property type="evidence" value="ECO:0000315"/>
    <property type="project" value="MGI"/>
</dbReference>
<dbReference type="GO" id="GO:0070588">
    <property type="term" value="P:calcium ion transmembrane transport"/>
    <property type="evidence" value="ECO:0000315"/>
    <property type="project" value="MGI"/>
</dbReference>
<dbReference type="GO" id="GO:0050910">
    <property type="term" value="P:detection of mechanical stimulus involved in sensory perception of sound"/>
    <property type="evidence" value="ECO:0000316"/>
    <property type="project" value="MGI"/>
</dbReference>
<dbReference type="GO" id="GO:1903169">
    <property type="term" value="P:regulation of calcium ion transmembrane transport"/>
    <property type="evidence" value="ECO:0000316"/>
    <property type="project" value="MGI"/>
</dbReference>
<dbReference type="GO" id="GO:0060005">
    <property type="term" value="P:vestibular reflex"/>
    <property type="evidence" value="ECO:0000316"/>
    <property type="project" value="MGI"/>
</dbReference>
<dbReference type="InterPro" id="IPR038900">
    <property type="entry name" value="TMC"/>
</dbReference>
<dbReference type="InterPro" id="IPR012496">
    <property type="entry name" value="TMC_dom"/>
</dbReference>
<dbReference type="PANTHER" id="PTHR23302:SF17">
    <property type="entry name" value="TRANSMEMBRANE CHANNEL-LIKE PROTEIN 2"/>
    <property type="match status" value="1"/>
</dbReference>
<dbReference type="PANTHER" id="PTHR23302">
    <property type="entry name" value="TRANSMEMBRANE CHANNEL-RELATED"/>
    <property type="match status" value="1"/>
</dbReference>
<dbReference type="Pfam" id="PF07810">
    <property type="entry name" value="TMC"/>
    <property type="match status" value="1"/>
</dbReference>
<comment type="function">
    <text evidence="3 5 7">Pore-forming subunit of the mechanotransducer (MET) non-selective cation channel complex located at the tips of stereocilia of cochlear hair cells and that mediates sensory transduction in the auditory system (PubMed:11850618, PubMed:23871232). The MET complex is composed of two dimeric pore-forming ion-conducting transmembrane TMC (TMC1 or TMC2) subunits, several auxiliary proteins including LHFPL5, TMIE, CIB2/3 and TOMT, the tip-link PCDH15, and possibly the PIEZO subunits (By similarity). MET channel is activated by tension in the tip-link extending from the side wall of one stereocilium to the tip of the adjacent shorter stereocilium, where the channel is located (By similarity). TMC2 MET channel is highly permeable to calcium and likely transports monovalent cations (PubMed:23871232). Also involved in vestibular hair cell transduction current of the mammalian inner ear (PubMed:23871232).</text>
</comment>
<comment type="catalytic activity">
    <reaction evidence="7">
        <text>Ca(2+)(in) = Ca(2+)(out)</text>
        <dbReference type="Rhea" id="RHEA:29671"/>
        <dbReference type="ChEBI" id="CHEBI:29108"/>
    </reaction>
</comment>
<comment type="subunit">
    <text evidence="8 9 10 11">Forms the MET channel composed of TMC dimer (TMC1 or TMC2), TMIE, TOMT, CIB (CIB2 or CIB3), LHFPL5 and PDH15 (PubMed:25114259, PubMed:28504928, PubMed:28663585, PubMed:30138589). The interaction of TMC1 and TMC2 with TOMT is required for the transportation of TMC1/2 into the stereocilia of hair cells (PubMed:28504928). Interacts (via N-terminus) with both isoforms CD1 and CD3 of PCDH15 (PubMed:25114259). Can form a heterodimer with TMC1, TMC5 or TMC7 (PubMed:30138589).</text>
</comment>
<comment type="subcellular location">
    <subcellularLocation>
        <location evidence="2">Cell membrane</location>
        <topology evidence="13">Multi-pass membrane protein</topology>
    </subcellularLocation>
    <text evidence="9 12">Localized to the stereocilia tips of the cochlear hair cells and plasma membranes of cuticular plates.</text>
</comment>
<comment type="tissue specificity">
    <text evidence="5 6 12">Inner ear and testis. Expressed in cochlear inner and outer hair cells and vestibular organ hair cells (PubMed:38228630).</text>
</comment>
<comment type="developmental stage">
    <text evidence="5">Expressed at low, constant levels in temporal bone from embryonic day 14 to day 1 after birth. Increases by 8 to 16-fold at day 5, 10 and 20.</text>
</comment>
<comment type="disruption phenotype">
    <text evidence="7">Knockout mice show reduced transduction current amplitudes in inner hair cells relative to wild-type.</text>
</comment>
<comment type="similarity">
    <text evidence="13">Belongs to the TMC family.</text>
</comment>
<comment type="caution">
    <text evidence="12">A study questions the role of TMC1 and TMC2 as pore-forming subunit of the MET complex. Instead, they suggest PIEZO1/2 subunits to constitute the pore and TMC to act as regulatory component of the MET channel.</text>
</comment>
<organism>
    <name type="scientific">Mus musculus</name>
    <name type="common">Mouse</name>
    <dbReference type="NCBI Taxonomy" id="10090"/>
    <lineage>
        <taxon>Eukaryota</taxon>
        <taxon>Metazoa</taxon>
        <taxon>Chordata</taxon>
        <taxon>Craniata</taxon>
        <taxon>Vertebrata</taxon>
        <taxon>Euteleostomi</taxon>
        <taxon>Mammalia</taxon>
        <taxon>Eutheria</taxon>
        <taxon>Euarchontoglires</taxon>
        <taxon>Glires</taxon>
        <taxon>Rodentia</taxon>
        <taxon>Myomorpha</taxon>
        <taxon>Muroidea</taxon>
        <taxon>Muridae</taxon>
        <taxon>Murinae</taxon>
        <taxon>Mus</taxon>
        <taxon>Mus</taxon>
    </lineage>
</organism>
<keyword id="KW-1003">Cell membrane</keyword>
<keyword id="KW-0407">Ion channel</keyword>
<keyword id="KW-0406">Ion transport</keyword>
<keyword id="KW-0472">Membrane</keyword>
<keyword id="KW-1185">Reference proteome</keyword>
<keyword id="KW-0812">Transmembrane</keyword>
<keyword id="KW-1133">Transmembrane helix</keyword>
<keyword id="KW-0813">Transport</keyword>
<name>TMC2_MOUSE</name>
<accession>Q8R4P4</accession>
<accession>Q7TQB1</accession>
<gene>
    <name evidence="14" type="primary">Tmc2</name>
</gene>
<evidence type="ECO:0000250" key="1">
    <source>
        <dbReference type="UniProtKB" id="D3KZG3"/>
    </source>
</evidence>
<evidence type="ECO:0000250" key="2">
    <source>
        <dbReference type="UniProtKB" id="E7FFT2"/>
    </source>
</evidence>
<evidence type="ECO:0000250" key="3">
    <source>
        <dbReference type="UniProtKB" id="Q8R4P5"/>
    </source>
</evidence>
<evidence type="ECO:0000256" key="4">
    <source>
        <dbReference type="SAM" id="MobiDB-lite"/>
    </source>
</evidence>
<evidence type="ECO:0000269" key="5">
    <source>
    </source>
</evidence>
<evidence type="ECO:0000269" key="6">
    <source>
    </source>
</evidence>
<evidence type="ECO:0000269" key="7">
    <source>
    </source>
</evidence>
<evidence type="ECO:0000269" key="8">
    <source>
    </source>
</evidence>
<evidence type="ECO:0000269" key="9">
    <source>
    </source>
</evidence>
<evidence type="ECO:0000269" key="10">
    <source>
    </source>
</evidence>
<evidence type="ECO:0000269" key="11">
    <source>
    </source>
</evidence>
<evidence type="ECO:0000269" key="12">
    <source>
    </source>
</evidence>
<evidence type="ECO:0000305" key="13"/>
<evidence type="ECO:0000312" key="14">
    <source>
        <dbReference type="MGI" id="MGI:2151017"/>
    </source>
</evidence>
<feature type="chain" id="PRO_0000185383" description="Transmembrane channel-like protein 2">
    <location>
        <begin position="1"/>
        <end position="888"/>
    </location>
</feature>
<feature type="topological domain" description="Cytoplasmic" evidence="13">
    <location>
        <begin position="1"/>
        <end position="228"/>
    </location>
</feature>
<feature type="transmembrane region" description="Helical" evidence="1">
    <location>
        <begin position="229"/>
        <end position="266"/>
    </location>
</feature>
<feature type="topological domain" description="Extracellular" evidence="13">
    <location>
        <begin position="267"/>
        <end position="317"/>
    </location>
</feature>
<feature type="transmembrane region" description="Helical" evidence="1">
    <location>
        <begin position="318"/>
        <end position="350"/>
    </location>
</feature>
<feature type="topological domain" description="Cytoplasmic" evidence="13">
    <location>
        <begin position="351"/>
        <end position="406"/>
    </location>
</feature>
<feature type="transmembrane region" description="Helical" evidence="1">
    <location>
        <begin position="407"/>
        <end position="437"/>
    </location>
</feature>
<feature type="topological domain" description="Extracellular" evidence="13">
    <location>
        <begin position="438"/>
        <end position="447"/>
    </location>
</feature>
<feature type="transmembrane region" description="Helical" evidence="1">
    <location>
        <begin position="448"/>
        <end position="475"/>
    </location>
</feature>
<feature type="topological domain" description="Cytoplasmic" evidence="13">
    <location>
        <begin position="476"/>
        <end position="479"/>
    </location>
</feature>
<feature type="transmembrane region" description="Helical" evidence="1">
    <location>
        <begin position="480"/>
        <end position="514"/>
    </location>
</feature>
<feature type="topological domain" description="Extracellular" evidence="13">
    <location>
        <begin position="515"/>
        <end position="556"/>
    </location>
</feature>
<feature type="transmembrane region" description="Helical" evidence="1">
    <location>
        <begin position="557"/>
        <end position="594"/>
    </location>
</feature>
<feature type="topological domain" description="Cytoplasmic" evidence="13">
    <location>
        <begin position="595"/>
        <end position="613"/>
    </location>
</feature>
<feature type="transmembrane region" description="Helical" evidence="1">
    <location>
        <begin position="614"/>
        <end position="634"/>
    </location>
</feature>
<feature type="topological domain" description="Extracellular" evidence="13">
    <location>
        <begin position="635"/>
        <end position="637"/>
    </location>
</feature>
<feature type="transmembrane region" description="Helical" evidence="1">
    <location>
        <begin position="638"/>
        <end position="660"/>
    </location>
</feature>
<feature type="topological domain" description="Cytoplasmic" evidence="13">
    <location>
        <begin position="661"/>
        <end position="674"/>
    </location>
</feature>
<feature type="transmembrane region" description="Helical" evidence="1">
    <location>
        <begin position="675"/>
        <end position="698"/>
    </location>
</feature>
<feature type="topological domain" description="Extracellular" evidence="13">
    <location>
        <begin position="699"/>
        <end position="741"/>
    </location>
</feature>
<feature type="transmembrane region" description="Helical" evidence="1">
    <location>
        <begin position="742"/>
        <end position="775"/>
    </location>
</feature>
<feature type="topological domain" description="Cytoplasmic" evidence="13">
    <location>
        <begin position="776"/>
        <end position="888"/>
    </location>
</feature>
<feature type="region of interest" description="Disordered" evidence="4">
    <location>
        <begin position="1"/>
        <end position="128"/>
    </location>
</feature>
<feature type="region of interest" description="Disordered" evidence="4">
    <location>
        <begin position="813"/>
        <end position="888"/>
    </location>
</feature>
<feature type="compositionally biased region" description="Basic and acidic residues" evidence="4">
    <location>
        <begin position="7"/>
        <end position="16"/>
    </location>
</feature>
<feature type="compositionally biased region" description="Basic and acidic residues" evidence="4">
    <location>
        <begin position="32"/>
        <end position="44"/>
    </location>
</feature>
<feature type="compositionally biased region" description="Basic and acidic residues" evidence="4">
    <location>
        <begin position="87"/>
        <end position="110"/>
    </location>
</feature>
<feature type="compositionally biased region" description="Polar residues" evidence="4">
    <location>
        <begin position="117"/>
        <end position="128"/>
    </location>
</feature>
<feature type="compositionally biased region" description="Polar residues" evidence="4">
    <location>
        <begin position="836"/>
        <end position="851"/>
    </location>
</feature>
<feature type="compositionally biased region" description="Polar residues" evidence="4">
    <location>
        <begin position="866"/>
        <end position="881"/>
    </location>
</feature>
<protein>
    <recommendedName>
        <fullName>Transmembrane channel-like protein 2</fullName>
    </recommendedName>
    <alternativeName>
        <fullName>Transmembrane cochlear-expressed protein 2</fullName>
    </alternativeName>
</protein>
<proteinExistence type="evidence at protein level"/>